<proteinExistence type="inferred from homology"/>
<accession>B8FZE1</accession>
<dbReference type="EC" id="4.1.1.11" evidence="1"/>
<dbReference type="EMBL" id="CP001336">
    <property type="protein sequence ID" value="ACL18224.1"/>
    <property type="molecule type" value="Genomic_DNA"/>
</dbReference>
<dbReference type="RefSeq" id="WP_011458949.1">
    <property type="nucleotide sequence ID" value="NC_011830.1"/>
</dbReference>
<dbReference type="SMR" id="B8FZE1"/>
<dbReference type="KEGG" id="dhd:Dhaf_0156"/>
<dbReference type="HOGENOM" id="CLU_115305_2_0_9"/>
<dbReference type="UniPathway" id="UPA00028">
    <property type="reaction ID" value="UER00002"/>
</dbReference>
<dbReference type="Proteomes" id="UP000007726">
    <property type="component" value="Chromosome"/>
</dbReference>
<dbReference type="GO" id="GO:0005829">
    <property type="term" value="C:cytosol"/>
    <property type="evidence" value="ECO:0007669"/>
    <property type="project" value="TreeGrafter"/>
</dbReference>
<dbReference type="GO" id="GO:0004068">
    <property type="term" value="F:aspartate 1-decarboxylase activity"/>
    <property type="evidence" value="ECO:0007669"/>
    <property type="project" value="UniProtKB-UniRule"/>
</dbReference>
<dbReference type="GO" id="GO:0006523">
    <property type="term" value="P:alanine biosynthetic process"/>
    <property type="evidence" value="ECO:0007669"/>
    <property type="project" value="InterPro"/>
</dbReference>
<dbReference type="GO" id="GO:0015940">
    <property type="term" value="P:pantothenate biosynthetic process"/>
    <property type="evidence" value="ECO:0007669"/>
    <property type="project" value="UniProtKB-UniRule"/>
</dbReference>
<dbReference type="CDD" id="cd06919">
    <property type="entry name" value="Asp_decarbox"/>
    <property type="match status" value="1"/>
</dbReference>
<dbReference type="Gene3D" id="2.40.40.20">
    <property type="match status" value="1"/>
</dbReference>
<dbReference type="HAMAP" id="MF_00446">
    <property type="entry name" value="PanD"/>
    <property type="match status" value="1"/>
</dbReference>
<dbReference type="InterPro" id="IPR009010">
    <property type="entry name" value="Asp_de-COase-like_dom_sf"/>
</dbReference>
<dbReference type="InterPro" id="IPR003190">
    <property type="entry name" value="Asp_decarbox"/>
</dbReference>
<dbReference type="NCBIfam" id="TIGR00223">
    <property type="entry name" value="panD"/>
    <property type="match status" value="1"/>
</dbReference>
<dbReference type="PANTHER" id="PTHR21012">
    <property type="entry name" value="ASPARTATE 1-DECARBOXYLASE"/>
    <property type="match status" value="1"/>
</dbReference>
<dbReference type="PANTHER" id="PTHR21012:SF0">
    <property type="entry name" value="ASPARTATE 1-DECARBOXYLASE"/>
    <property type="match status" value="1"/>
</dbReference>
<dbReference type="Pfam" id="PF02261">
    <property type="entry name" value="Asp_decarbox"/>
    <property type="match status" value="1"/>
</dbReference>
<dbReference type="PIRSF" id="PIRSF006246">
    <property type="entry name" value="Asp_decarbox"/>
    <property type="match status" value="1"/>
</dbReference>
<dbReference type="SUPFAM" id="SSF50692">
    <property type="entry name" value="ADC-like"/>
    <property type="match status" value="1"/>
</dbReference>
<sequence length="127" mass="14096">MFRTMMKSKIHRATVTEANLKYVGSITIDEELLEVADILPNEKVQVVNNNNGARLETYVIPGKRGERTVCLNGAAARLVQVGDEVIIIAYGIFTDEAARTYEPKVIFVDEGNNPVKIAHEEIHGQQS</sequence>
<name>PAND_DESHD</name>
<reference key="1">
    <citation type="journal article" date="2012" name="BMC Microbiol.">
        <title>Genome sequence of Desulfitobacterium hafniense DCB-2, a Gram-positive anaerobe capable of dehalogenation and metal reduction.</title>
        <authorList>
            <person name="Kim S.H."/>
            <person name="Harzman C."/>
            <person name="Davis J.K."/>
            <person name="Hutcheson R."/>
            <person name="Broderick J.B."/>
            <person name="Marsh T.L."/>
            <person name="Tiedje J.M."/>
        </authorList>
    </citation>
    <scope>NUCLEOTIDE SEQUENCE [LARGE SCALE GENOMIC DNA]</scope>
    <source>
        <strain>DSM 10664 / DCB-2</strain>
    </source>
</reference>
<evidence type="ECO:0000255" key="1">
    <source>
        <dbReference type="HAMAP-Rule" id="MF_00446"/>
    </source>
</evidence>
<feature type="chain" id="PRO_1000191978" description="Aspartate 1-decarboxylase beta chain" evidence="1">
    <location>
        <begin position="1"/>
        <end position="24"/>
    </location>
</feature>
<feature type="chain" id="PRO_1000191979" description="Aspartate 1-decarboxylase alpha chain" evidence="1">
    <location>
        <begin position="25"/>
        <end position="127"/>
    </location>
</feature>
<feature type="active site" description="Schiff-base intermediate with substrate; via pyruvic acid" evidence="1">
    <location>
        <position position="25"/>
    </location>
</feature>
<feature type="active site" description="Proton donor" evidence="1">
    <location>
        <position position="58"/>
    </location>
</feature>
<feature type="binding site" evidence="1">
    <location>
        <position position="57"/>
    </location>
    <ligand>
        <name>substrate</name>
    </ligand>
</feature>
<feature type="binding site" evidence="1">
    <location>
        <begin position="73"/>
        <end position="75"/>
    </location>
    <ligand>
        <name>substrate</name>
    </ligand>
</feature>
<feature type="modified residue" description="Pyruvic acid (Ser)" evidence="1">
    <location>
        <position position="25"/>
    </location>
</feature>
<keyword id="KW-0068">Autocatalytic cleavage</keyword>
<keyword id="KW-0963">Cytoplasm</keyword>
<keyword id="KW-0210">Decarboxylase</keyword>
<keyword id="KW-0456">Lyase</keyword>
<keyword id="KW-0566">Pantothenate biosynthesis</keyword>
<keyword id="KW-0670">Pyruvate</keyword>
<keyword id="KW-0704">Schiff base</keyword>
<keyword id="KW-0865">Zymogen</keyword>
<comment type="function">
    <text evidence="1">Catalyzes the pyruvoyl-dependent decarboxylation of aspartate to produce beta-alanine.</text>
</comment>
<comment type="catalytic activity">
    <reaction evidence="1">
        <text>L-aspartate + H(+) = beta-alanine + CO2</text>
        <dbReference type="Rhea" id="RHEA:19497"/>
        <dbReference type="ChEBI" id="CHEBI:15378"/>
        <dbReference type="ChEBI" id="CHEBI:16526"/>
        <dbReference type="ChEBI" id="CHEBI:29991"/>
        <dbReference type="ChEBI" id="CHEBI:57966"/>
        <dbReference type="EC" id="4.1.1.11"/>
    </reaction>
</comment>
<comment type="cofactor">
    <cofactor evidence="1">
        <name>pyruvate</name>
        <dbReference type="ChEBI" id="CHEBI:15361"/>
    </cofactor>
    <text evidence="1">Binds 1 pyruvoyl group covalently per subunit.</text>
</comment>
<comment type="pathway">
    <text evidence="1">Cofactor biosynthesis; (R)-pantothenate biosynthesis; beta-alanine from L-aspartate: step 1/1.</text>
</comment>
<comment type="subunit">
    <text evidence="1">Heterooctamer of four alpha and four beta subunits.</text>
</comment>
<comment type="subcellular location">
    <subcellularLocation>
        <location evidence="1">Cytoplasm</location>
    </subcellularLocation>
</comment>
<comment type="PTM">
    <text evidence="1">Is synthesized initially as an inactive proenzyme, which is activated by self-cleavage at a specific serine bond to produce a beta-subunit with a hydroxyl group at its C-terminus and an alpha-subunit with a pyruvoyl group at its N-terminus.</text>
</comment>
<comment type="similarity">
    <text evidence="1">Belongs to the PanD family.</text>
</comment>
<gene>
    <name evidence="1" type="primary">panD</name>
    <name type="ordered locus">Dhaf_0156</name>
</gene>
<organism>
    <name type="scientific">Desulfitobacterium hafniense (strain DSM 10664 / DCB-2)</name>
    <dbReference type="NCBI Taxonomy" id="272564"/>
    <lineage>
        <taxon>Bacteria</taxon>
        <taxon>Bacillati</taxon>
        <taxon>Bacillota</taxon>
        <taxon>Clostridia</taxon>
        <taxon>Eubacteriales</taxon>
        <taxon>Desulfitobacteriaceae</taxon>
        <taxon>Desulfitobacterium</taxon>
    </lineage>
</organism>
<protein>
    <recommendedName>
        <fullName evidence="1">Aspartate 1-decarboxylase</fullName>
        <ecNumber evidence="1">4.1.1.11</ecNumber>
    </recommendedName>
    <alternativeName>
        <fullName evidence="1">Aspartate alpha-decarboxylase</fullName>
    </alternativeName>
    <component>
        <recommendedName>
            <fullName evidence="1">Aspartate 1-decarboxylase beta chain</fullName>
        </recommendedName>
    </component>
    <component>
        <recommendedName>
            <fullName evidence="1">Aspartate 1-decarboxylase alpha chain</fullName>
        </recommendedName>
    </component>
</protein>